<evidence type="ECO:0000255" key="1">
    <source>
        <dbReference type="HAMAP-Rule" id="MF_00017"/>
    </source>
</evidence>
<protein>
    <recommendedName>
        <fullName evidence="1">Recombination protein RecR</fullName>
    </recommendedName>
</protein>
<dbReference type="EMBL" id="CP000046">
    <property type="protein sequence ID" value="AAW37641.1"/>
    <property type="molecule type" value="Genomic_DNA"/>
</dbReference>
<dbReference type="RefSeq" id="WP_000559156.1">
    <property type="nucleotide sequence ID" value="NZ_JBGOFO010000010.1"/>
</dbReference>
<dbReference type="SMR" id="Q5HIJ7"/>
<dbReference type="KEGG" id="sac:SACOL0522"/>
<dbReference type="HOGENOM" id="CLU_060739_1_0_9"/>
<dbReference type="Proteomes" id="UP000000530">
    <property type="component" value="Chromosome"/>
</dbReference>
<dbReference type="GO" id="GO:0003677">
    <property type="term" value="F:DNA binding"/>
    <property type="evidence" value="ECO:0007669"/>
    <property type="project" value="UniProtKB-UniRule"/>
</dbReference>
<dbReference type="GO" id="GO:0008270">
    <property type="term" value="F:zinc ion binding"/>
    <property type="evidence" value="ECO:0007669"/>
    <property type="project" value="UniProtKB-KW"/>
</dbReference>
<dbReference type="GO" id="GO:0006310">
    <property type="term" value="P:DNA recombination"/>
    <property type="evidence" value="ECO:0007669"/>
    <property type="project" value="UniProtKB-UniRule"/>
</dbReference>
<dbReference type="GO" id="GO:0006281">
    <property type="term" value="P:DNA repair"/>
    <property type="evidence" value="ECO:0007669"/>
    <property type="project" value="UniProtKB-UniRule"/>
</dbReference>
<dbReference type="CDD" id="cd01025">
    <property type="entry name" value="TOPRIM_recR"/>
    <property type="match status" value="1"/>
</dbReference>
<dbReference type="Gene3D" id="3.30.60.80">
    <property type="match status" value="1"/>
</dbReference>
<dbReference type="Gene3D" id="3.40.1360.10">
    <property type="match status" value="1"/>
</dbReference>
<dbReference type="Gene3D" id="6.10.250.240">
    <property type="match status" value="1"/>
</dbReference>
<dbReference type="Gene3D" id="1.10.8.420">
    <property type="entry name" value="RecR Domain 1"/>
    <property type="match status" value="1"/>
</dbReference>
<dbReference type="HAMAP" id="MF_00017">
    <property type="entry name" value="RecR"/>
    <property type="match status" value="1"/>
</dbReference>
<dbReference type="InterPro" id="IPR000093">
    <property type="entry name" value="DNA_Rcmb_RecR"/>
</dbReference>
<dbReference type="InterPro" id="IPR003583">
    <property type="entry name" value="Hlx-hairpin-Hlx_DNA-bd_motif"/>
</dbReference>
<dbReference type="InterPro" id="IPR023627">
    <property type="entry name" value="Rcmb_RecR"/>
</dbReference>
<dbReference type="InterPro" id="IPR015967">
    <property type="entry name" value="Rcmb_RecR_Znf"/>
</dbReference>
<dbReference type="InterPro" id="IPR006171">
    <property type="entry name" value="TOPRIM_dom"/>
</dbReference>
<dbReference type="InterPro" id="IPR034137">
    <property type="entry name" value="TOPRIM_RecR"/>
</dbReference>
<dbReference type="NCBIfam" id="TIGR00615">
    <property type="entry name" value="recR"/>
    <property type="match status" value="1"/>
</dbReference>
<dbReference type="PANTHER" id="PTHR30446">
    <property type="entry name" value="RECOMBINATION PROTEIN RECR"/>
    <property type="match status" value="1"/>
</dbReference>
<dbReference type="PANTHER" id="PTHR30446:SF0">
    <property type="entry name" value="RECOMBINATION PROTEIN RECR"/>
    <property type="match status" value="1"/>
</dbReference>
<dbReference type="Pfam" id="PF21175">
    <property type="entry name" value="RecR_C"/>
    <property type="match status" value="1"/>
</dbReference>
<dbReference type="Pfam" id="PF21176">
    <property type="entry name" value="RecR_HhH"/>
    <property type="match status" value="1"/>
</dbReference>
<dbReference type="Pfam" id="PF02132">
    <property type="entry name" value="RecR_ZnF"/>
    <property type="match status" value="1"/>
</dbReference>
<dbReference type="Pfam" id="PF13662">
    <property type="entry name" value="Toprim_4"/>
    <property type="match status" value="1"/>
</dbReference>
<dbReference type="SMART" id="SM00278">
    <property type="entry name" value="HhH1"/>
    <property type="match status" value="1"/>
</dbReference>
<dbReference type="SMART" id="SM00493">
    <property type="entry name" value="TOPRIM"/>
    <property type="match status" value="1"/>
</dbReference>
<dbReference type="SUPFAM" id="SSF111304">
    <property type="entry name" value="Recombination protein RecR"/>
    <property type="match status" value="1"/>
</dbReference>
<dbReference type="PROSITE" id="PS01300">
    <property type="entry name" value="RECR"/>
    <property type="match status" value="1"/>
</dbReference>
<dbReference type="PROSITE" id="PS50880">
    <property type="entry name" value="TOPRIM"/>
    <property type="match status" value="1"/>
</dbReference>
<reference key="1">
    <citation type="journal article" date="2005" name="J. Bacteriol.">
        <title>Insights on evolution of virulence and resistance from the complete genome analysis of an early methicillin-resistant Staphylococcus aureus strain and a biofilm-producing methicillin-resistant Staphylococcus epidermidis strain.</title>
        <authorList>
            <person name="Gill S.R."/>
            <person name="Fouts D.E."/>
            <person name="Archer G.L."/>
            <person name="Mongodin E.F."/>
            <person name="DeBoy R.T."/>
            <person name="Ravel J."/>
            <person name="Paulsen I.T."/>
            <person name="Kolonay J.F."/>
            <person name="Brinkac L.M."/>
            <person name="Beanan M.J."/>
            <person name="Dodson R.J."/>
            <person name="Daugherty S.C."/>
            <person name="Madupu R."/>
            <person name="Angiuoli S.V."/>
            <person name="Durkin A.S."/>
            <person name="Haft D.H."/>
            <person name="Vamathevan J.J."/>
            <person name="Khouri H."/>
            <person name="Utterback T.R."/>
            <person name="Lee C."/>
            <person name="Dimitrov G."/>
            <person name="Jiang L."/>
            <person name="Qin H."/>
            <person name="Weidman J."/>
            <person name="Tran K."/>
            <person name="Kang K.H."/>
            <person name="Hance I.R."/>
            <person name="Nelson K.E."/>
            <person name="Fraser C.M."/>
        </authorList>
    </citation>
    <scope>NUCLEOTIDE SEQUENCE [LARGE SCALE GENOMIC DNA]</scope>
    <source>
        <strain>COL</strain>
    </source>
</reference>
<proteinExistence type="inferred from homology"/>
<organism>
    <name type="scientific">Staphylococcus aureus (strain COL)</name>
    <dbReference type="NCBI Taxonomy" id="93062"/>
    <lineage>
        <taxon>Bacteria</taxon>
        <taxon>Bacillati</taxon>
        <taxon>Bacillota</taxon>
        <taxon>Bacilli</taxon>
        <taxon>Bacillales</taxon>
        <taxon>Staphylococcaceae</taxon>
        <taxon>Staphylococcus</taxon>
    </lineage>
</organism>
<feature type="chain" id="PRO_0000190385" description="Recombination protein RecR">
    <location>
        <begin position="1"/>
        <end position="198"/>
    </location>
</feature>
<feature type="domain" description="Toprim" evidence="1">
    <location>
        <begin position="80"/>
        <end position="175"/>
    </location>
</feature>
<feature type="zinc finger region" description="C4-type" evidence="1">
    <location>
        <begin position="57"/>
        <end position="72"/>
    </location>
</feature>
<name>RECR_STAAC</name>
<keyword id="KW-0227">DNA damage</keyword>
<keyword id="KW-0233">DNA recombination</keyword>
<keyword id="KW-0234">DNA repair</keyword>
<keyword id="KW-0479">Metal-binding</keyword>
<keyword id="KW-0862">Zinc</keyword>
<keyword id="KW-0863">Zinc-finger</keyword>
<sequence>MHYPEPISKLIDSFMKLPGIGPKTAQRLAFHTLDMKEDDVVQFAKALVDVKRELTYCSVCGHITENDPCYICEDKQRDRSVICVVEDDKDVIAMEKMREYKGLYHVLHGSISPMDGIGPEDINIPSLIERLKNDEVSELILAMNPNLEGESTAMYISRLVKPIGIKVTRLAQGLSVGGDLEYADEVTLSKAIAGRTEM</sequence>
<gene>
    <name evidence="1" type="primary">recR</name>
    <name type="ordered locus">SACOL0522</name>
</gene>
<accession>Q5HIJ7</accession>
<comment type="function">
    <text evidence="1">May play a role in DNA repair. It seems to be involved in an RecBC-independent recombinational process of DNA repair. It may act with RecF and RecO.</text>
</comment>
<comment type="similarity">
    <text evidence="1">Belongs to the RecR family.</text>
</comment>